<protein>
    <recommendedName>
        <fullName evidence="1">3-methyl-2-oxobutanoate hydroxymethyltransferase</fullName>
        <ecNumber evidence="1">2.1.2.11</ecNumber>
    </recommendedName>
    <alternativeName>
        <fullName evidence="1">Ketopantoate hydroxymethyltransferase</fullName>
        <shortName evidence="1">KPHMT</shortName>
    </alternativeName>
</protein>
<dbReference type="EC" id="2.1.2.11" evidence="1"/>
<dbReference type="EMBL" id="CP001019">
    <property type="protein sequence ID" value="ACJ18881.1"/>
    <property type="molecule type" value="Genomic_DNA"/>
</dbReference>
<dbReference type="RefSeq" id="WP_012570334.1">
    <property type="nucleotide sequence ID" value="NC_011527.1"/>
</dbReference>
<dbReference type="SMR" id="B6J1Q3"/>
<dbReference type="KEGG" id="cbg:CbuG_1588"/>
<dbReference type="HOGENOM" id="CLU_036645_1_0_6"/>
<dbReference type="UniPathway" id="UPA00028">
    <property type="reaction ID" value="UER00003"/>
</dbReference>
<dbReference type="GO" id="GO:0005737">
    <property type="term" value="C:cytoplasm"/>
    <property type="evidence" value="ECO:0007669"/>
    <property type="project" value="UniProtKB-SubCell"/>
</dbReference>
<dbReference type="GO" id="GO:0003864">
    <property type="term" value="F:3-methyl-2-oxobutanoate hydroxymethyltransferase activity"/>
    <property type="evidence" value="ECO:0007669"/>
    <property type="project" value="UniProtKB-UniRule"/>
</dbReference>
<dbReference type="GO" id="GO:0000287">
    <property type="term" value="F:magnesium ion binding"/>
    <property type="evidence" value="ECO:0007669"/>
    <property type="project" value="TreeGrafter"/>
</dbReference>
<dbReference type="GO" id="GO:0015940">
    <property type="term" value="P:pantothenate biosynthetic process"/>
    <property type="evidence" value="ECO:0007669"/>
    <property type="project" value="UniProtKB-UniRule"/>
</dbReference>
<dbReference type="CDD" id="cd06557">
    <property type="entry name" value="KPHMT-like"/>
    <property type="match status" value="1"/>
</dbReference>
<dbReference type="FunFam" id="3.20.20.60:FF:000078">
    <property type="entry name" value="3-methyl-2-oxobutanoate hydroxymethyltransferase"/>
    <property type="match status" value="1"/>
</dbReference>
<dbReference type="Gene3D" id="3.20.20.60">
    <property type="entry name" value="Phosphoenolpyruvate-binding domains"/>
    <property type="match status" value="1"/>
</dbReference>
<dbReference type="HAMAP" id="MF_00156">
    <property type="entry name" value="PanB"/>
    <property type="match status" value="1"/>
</dbReference>
<dbReference type="InterPro" id="IPR003700">
    <property type="entry name" value="Pantoate_hydroxy_MeTrfase"/>
</dbReference>
<dbReference type="InterPro" id="IPR015813">
    <property type="entry name" value="Pyrv/PenolPyrv_kinase-like_dom"/>
</dbReference>
<dbReference type="InterPro" id="IPR040442">
    <property type="entry name" value="Pyrv_kinase-like_dom_sf"/>
</dbReference>
<dbReference type="NCBIfam" id="TIGR00222">
    <property type="entry name" value="panB"/>
    <property type="match status" value="1"/>
</dbReference>
<dbReference type="NCBIfam" id="NF001452">
    <property type="entry name" value="PRK00311.1"/>
    <property type="match status" value="1"/>
</dbReference>
<dbReference type="PANTHER" id="PTHR20881">
    <property type="entry name" value="3-METHYL-2-OXOBUTANOATE HYDROXYMETHYLTRANSFERASE"/>
    <property type="match status" value="1"/>
</dbReference>
<dbReference type="PANTHER" id="PTHR20881:SF0">
    <property type="entry name" value="3-METHYL-2-OXOBUTANOATE HYDROXYMETHYLTRANSFERASE"/>
    <property type="match status" value="1"/>
</dbReference>
<dbReference type="Pfam" id="PF02548">
    <property type="entry name" value="Pantoate_transf"/>
    <property type="match status" value="1"/>
</dbReference>
<dbReference type="PIRSF" id="PIRSF000388">
    <property type="entry name" value="Pantoate_hydroxy_MeTrfase"/>
    <property type="match status" value="1"/>
</dbReference>
<dbReference type="SUPFAM" id="SSF51621">
    <property type="entry name" value="Phosphoenolpyruvate/pyruvate domain"/>
    <property type="match status" value="1"/>
</dbReference>
<reference key="1">
    <citation type="journal article" date="2009" name="Infect. Immun.">
        <title>Comparative genomics reveal extensive transposon-mediated genomic plasticity and diversity among potential effector proteins within the genus Coxiella.</title>
        <authorList>
            <person name="Beare P.A."/>
            <person name="Unsworth N."/>
            <person name="Andoh M."/>
            <person name="Voth D.E."/>
            <person name="Omsland A."/>
            <person name="Gilk S.D."/>
            <person name="Williams K.P."/>
            <person name="Sobral B.W."/>
            <person name="Kupko J.J. III"/>
            <person name="Porcella S.F."/>
            <person name="Samuel J.E."/>
            <person name="Heinzen R.A."/>
        </authorList>
    </citation>
    <scope>NUCLEOTIDE SEQUENCE [LARGE SCALE GENOMIC DNA]</scope>
    <source>
        <strain>CbuG_Q212</strain>
    </source>
</reference>
<gene>
    <name evidence="1" type="primary">panB</name>
    <name type="ordered locus">CbuG_1588</name>
</gene>
<organism>
    <name type="scientific">Coxiella burnetii (strain CbuG_Q212)</name>
    <name type="common">Coxiella burnetii (strain Q212)</name>
    <dbReference type="NCBI Taxonomy" id="434923"/>
    <lineage>
        <taxon>Bacteria</taxon>
        <taxon>Pseudomonadati</taxon>
        <taxon>Pseudomonadota</taxon>
        <taxon>Gammaproteobacteria</taxon>
        <taxon>Legionellales</taxon>
        <taxon>Coxiellaceae</taxon>
        <taxon>Coxiella</taxon>
    </lineage>
</organism>
<sequence length="266" mass="29029">MIAMNTPDFQRMKKDNKKISMVTCYDYWSACIISQSNVDCILVGDSLAMVMYGHSTTLPATVEIMAQHIQAVSRGAPNKFIIGDMPFCSYRKDLTTSMNAVERLMQAGAQAIKLEGADAHNLKFIHHVVKSGIPVIGHLGLTPQSIYTLGGFKVQGKEPSAAKKLMADAKALAETGCFAMVLECVPSELAELITHSISIPTIGIGAGPATSGQVLVLQDLLGTNNQFQPKYLKKFLNGFELIKKALDDFDQEVKTSTYPHLETHCY</sequence>
<accession>B6J1Q3</accession>
<evidence type="ECO:0000255" key="1">
    <source>
        <dbReference type="HAMAP-Rule" id="MF_00156"/>
    </source>
</evidence>
<feature type="chain" id="PRO_1000096957" description="3-methyl-2-oxobutanoate hydroxymethyltransferase">
    <location>
        <begin position="1"/>
        <end position="266"/>
    </location>
</feature>
<feature type="active site" description="Proton acceptor" evidence="1">
    <location>
        <position position="183"/>
    </location>
</feature>
<feature type="binding site" evidence="1">
    <location>
        <begin position="45"/>
        <end position="46"/>
    </location>
    <ligand>
        <name>3-methyl-2-oxobutanoate</name>
        <dbReference type="ChEBI" id="CHEBI:11851"/>
    </ligand>
</feature>
<feature type="binding site" evidence="1">
    <location>
        <position position="45"/>
    </location>
    <ligand>
        <name>Mg(2+)</name>
        <dbReference type="ChEBI" id="CHEBI:18420"/>
    </ligand>
</feature>
<feature type="binding site" evidence="1">
    <location>
        <position position="84"/>
    </location>
    <ligand>
        <name>3-methyl-2-oxobutanoate</name>
        <dbReference type="ChEBI" id="CHEBI:11851"/>
    </ligand>
</feature>
<feature type="binding site" evidence="1">
    <location>
        <position position="84"/>
    </location>
    <ligand>
        <name>Mg(2+)</name>
        <dbReference type="ChEBI" id="CHEBI:18420"/>
    </ligand>
</feature>
<feature type="binding site" evidence="1">
    <location>
        <position position="113"/>
    </location>
    <ligand>
        <name>3-methyl-2-oxobutanoate</name>
        <dbReference type="ChEBI" id="CHEBI:11851"/>
    </ligand>
</feature>
<feature type="binding site" evidence="1">
    <location>
        <position position="115"/>
    </location>
    <ligand>
        <name>Mg(2+)</name>
        <dbReference type="ChEBI" id="CHEBI:18420"/>
    </ligand>
</feature>
<name>PANB_COXB2</name>
<keyword id="KW-0963">Cytoplasm</keyword>
<keyword id="KW-0460">Magnesium</keyword>
<keyword id="KW-0479">Metal-binding</keyword>
<keyword id="KW-0566">Pantothenate biosynthesis</keyword>
<keyword id="KW-0808">Transferase</keyword>
<proteinExistence type="inferred from homology"/>
<comment type="function">
    <text evidence="1">Catalyzes the reversible reaction in which hydroxymethyl group from 5,10-methylenetetrahydrofolate is transferred onto alpha-ketoisovalerate to form ketopantoate.</text>
</comment>
<comment type="catalytic activity">
    <reaction evidence="1">
        <text>3-methyl-2-oxobutanoate + (6R)-5,10-methylene-5,6,7,8-tetrahydrofolate + H2O = 2-dehydropantoate + (6S)-5,6,7,8-tetrahydrofolate</text>
        <dbReference type="Rhea" id="RHEA:11824"/>
        <dbReference type="ChEBI" id="CHEBI:11561"/>
        <dbReference type="ChEBI" id="CHEBI:11851"/>
        <dbReference type="ChEBI" id="CHEBI:15377"/>
        <dbReference type="ChEBI" id="CHEBI:15636"/>
        <dbReference type="ChEBI" id="CHEBI:57453"/>
        <dbReference type="EC" id="2.1.2.11"/>
    </reaction>
</comment>
<comment type="cofactor">
    <cofactor evidence="1">
        <name>Mg(2+)</name>
        <dbReference type="ChEBI" id="CHEBI:18420"/>
    </cofactor>
    <text evidence="1">Binds 1 Mg(2+) ion per subunit.</text>
</comment>
<comment type="pathway">
    <text evidence="1">Cofactor biosynthesis; (R)-pantothenate biosynthesis; (R)-pantoate from 3-methyl-2-oxobutanoate: step 1/2.</text>
</comment>
<comment type="subunit">
    <text evidence="1">Homodecamer; pentamer of dimers.</text>
</comment>
<comment type="subcellular location">
    <subcellularLocation>
        <location evidence="1">Cytoplasm</location>
    </subcellularLocation>
</comment>
<comment type="similarity">
    <text evidence="1">Belongs to the PanB family.</text>
</comment>